<gene>
    <name evidence="1" type="primary">thiC</name>
    <name type="ordered locus">Sama_1860</name>
</gene>
<proteinExistence type="inferred from homology"/>
<keyword id="KW-0004">4Fe-4S</keyword>
<keyword id="KW-0408">Iron</keyword>
<keyword id="KW-0411">Iron-sulfur</keyword>
<keyword id="KW-0456">Lyase</keyword>
<keyword id="KW-0479">Metal-binding</keyword>
<keyword id="KW-1185">Reference proteome</keyword>
<keyword id="KW-0949">S-adenosyl-L-methionine</keyword>
<keyword id="KW-0784">Thiamine biosynthesis</keyword>
<keyword id="KW-0862">Zinc</keyword>
<dbReference type="EC" id="4.1.99.17" evidence="1"/>
<dbReference type="EMBL" id="CP000507">
    <property type="protein sequence ID" value="ABM00066.1"/>
    <property type="molecule type" value="Genomic_DNA"/>
</dbReference>
<dbReference type="RefSeq" id="WP_011759973.1">
    <property type="nucleotide sequence ID" value="NC_008700.1"/>
</dbReference>
<dbReference type="SMR" id="A1S6Q9"/>
<dbReference type="STRING" id="326297.Sama_1860"/>
<dbReference type="KEGG" id="saz:Sama_1860"/>
<dbReference type="eggNOG" id="COG0422">
    <property type="taxonomic scope" value="Bacteria"/>
</dbReference>
<dbReference type="HOGENOM" id="CLU_013181_2_1_6"/>
<dbReference type="UniPathway" id="UPA00060"/>
<dbReference type="Proteomes" id="UP000009175">
    <property type="component" value="Chromosome"/>
</dbReference>
<dbReference type="GO" id="GO:0005829">
    <property type="term" value="C:cytosol"/>
    <property type="evidence" value="ECO:0007669"/>
    <property type="project" value="TreeGrafter"/>
</dbReference>
<dbReference type="GO" id="GO:0051539">
    <property type="term" value="F:4 iron, 4 sulfur cluster binding"/>
    <property type="evidence" value="ECO:0007669"/>
    <property type="project" value="UniProtKB-KW"/>
</dbReference>
<dbReference type="GO" id="GO:0016830">
    <property type="term" value="F:carbon-carbon lyase activity"/>
    <property type="evidence" value="ECO:0007669"/>
    <property type="project" value="InterPro"/>
</dbReference>
<dbReference type="GO" id="GO:0008270">
    <property type="term" value="F:zinc ion binding"/>
    <property type="evidence" value="ECO:0007669"/>
    <property type="project" value="UniProtKB-UniRule"/>
</dbReference>
<dbReference type="GO" id="GO:0009228">
    <property type="term" value="P:thiamine biosynthetic process"/>
    <property type="evidence" value="ECO:0007669"/>
    <property type="project" value="UniProtKB-KW"/>
</dbReference>
<dbReference type="GO" id="GO:0009229">
    <property type="term" value="P:thiamine diphosphate biosynthetic process"/>
    <property type="evidence" value="ECO:0007669"/>
    <property type="project" value="UniProtKB-UniRule"/>
</dbReference>
<dbReference type="FunFam" id="3.20.20.540:FF:000001">
    <property type="entry name" value="Phosphomethylpyrimidine synthase"/>
    <property type="match status" value="1"/>
</dbReference>
<dbReference type="Gene3D" id="6.10.250.620">
    <property type="match status" value="1"/>
</dbReference>
<dbReference type="Gene3D" id="3.20.20.540">
    <property type="entry name" value="Radical SAM ThiC family, central domain"/>
    <property type="match status" value="1"/>
</dbReference>
<dbReference type="HAMAP" id="MF_00089">
    <property type="entry name" value="ThiC"/>
    <property type="match status" value="1"/>
</dbReference>
<dbReference type="InterPro" id="IPR037509">
    <property type="entry name" value="ThiC"/>
</dbReference>
<dbReference type="InterPro" id="IPR025747">
    <property type="entry name" value="ThiC-associated_dom"/>
</dbReference>
<dbReference type="InterPro" id="IPR038521">
    <property type="entry name" value="ThiC/Bza_core_dom"/>
</dbReference>
<dbReference type="InterPro" id="IPR002817">
    <property type="entry name" value="ThiC/BzaA/B"/>
</dbReference>
<dbReference type="NCBIfam" id="NF006763">
    <property type="entry name" value="PRK09284.1"/>
    <property type="match status" value="1"/>
</dbReference>
<dbReference type="NCBIfam" id="NF009895">
    <property type="entry name" value="PRK13352.1"/>
    <property type="match status" value="1"/>
</dbReference>
<dbReference type="NCBIfam" id="TIGR00190">
    <property type="entry name" value="thiC"/>
    <property type="match status" value="1"/>
</dbReference>
<dbReference type="PANTHER" id="PTHR30557:SF1">
    <property type="entry name" value="PHOSPHOMETHYLPYRIMIDINE SYNTHASE, CHLOROPLASTIC"/>
    <property type="match status" value="1"/>
</dbReference>
<dbReference type="PANTHER" id="PTHR30557">
    <property type="entry name" value="THIAMINE BIOSYNTHESIS PROTEIN THIC"/>
    <property type="match status" value="1"/>
</dbReference>
<dbReference type="Pfam" id="PF13667">
    <property type="entry name" value="ThiC-associated"/>
    <property type="match status" value="1"/>
</dbReference>
<dbReference type="Pfam" id="PF01964">
    <property type="entry name" value="ThiC_Rad_SAM"/>
    <property type="match status" value="1"/>
</dbReference>
<dbReference type="SFLD" id="SFLDF00407">
    <property type="entry name" value="phosphomethylpyrimidine_syntha"/>
    <property type="match status" value="1"/>
</dbReference>
<dbReference type="SFLD" id="SFLDG01114">
    <property type="entry name" value="phosphomethylpyrimidine_syntha"/>
    <property type="match status" value="1"/>
</dbReference>
<dbReference type="SFLD" id="SFLDS00113">
    <property type="entry name" value="Radical_SAM_Phosphomethylpyrim"/>
    <property type="match status" value="1"/>
</dbReference>
<comment type="function">
    <text evidence="1">Catalyzes the synthesis of the hydroxymethylpyrimidine phosphate (HMP-P) moiety of thiamine from aminoimidazole ribotide (AIR) in a radical S-adenosyl-L-methionine (SAM)-dependent reaction.</text>
</comment>
<comment type="catalytic activity">
    <reaction evidence="1">
        <text>5-amino-1-(5-phospho-beta-D-ribosyl)imidazole + S-adenosyl-L-methionine = 4-amino-2-methyl-5-(phosphooxymethyl)pyrimidine + CO + 5'-deoxyadenosine + formate + L-methionine + 3 H(+)</text>
        <dbReference type="Rhea" id="RHEA:24840"/>
        <dbReference type="ChEBI" id="CHEBI:15378"/>
        <dbReference type="ChEBI" id="CHEBI:15740"/>
        <dbReference type="ChEBI" id="CHEBI:17245"/>
        <dbReference type="ChEBI" id="CHEBI:17319"/>
        <dbReference type="ChEBI" id="CHEBI:57844"/>
        <dbReference type="ChEBI" id="CHEBI:58354"/>
        <dbReference type="ChEBI" id="CHEBI:59789"/>
        <dbReference type="ChEBI" id="CHEBI:137981"/>
        <dbReference type="EC" id="4.1.99.17"/>
    </reaction>
</comment>
<comment type="cofactor">
    <cofactor evidence="1">
        <name>[4Fe-4S] cluster</name>
        <dbReference type="ChEBI" id="CHEBI:49883"/>
    </cofactor>
    <text evidence="1">Binds 1 [4Fe-4S] cluster per subunit. The cluster is coordinated with 3 cysteines and an exchangeable S-adenosyl-L-methionine.</text>
</comment>
<comment type="pathway">
    <text evidence="1">Cofactor biosynthesis; thiamine diphosphate biosynthesis.</text>
</comment>
<comment type="subunit">
    <text evidence="1">Homodimer.</text>
</comment>
<comment type="similarity">
    <text evidence="1">Belongs to the ThiC family.</text>
</comment>
<feature type="chain" id="PRO_1000004800" description="Phosphomethylpyrimidine synthase">
    <location>
        <begin position="1"/>
        <end position="664"/>
    </location>
</feature>
<feature type="binding site" evidence="1">
    <location>
        <position position="235"/>
    </location>
    <ligand>
        <name>substrate</name>
    </ligand>
</feature>
<feature type="binding site" evidence="1">
    <location>
        <position position="264"/>
    </location>
    <ligand>
        <name>substrate</name>
    </ligand>
</feature>
<feature type="binding site" evidence="1">
    <location>
        <position position="293"/>
    </location>
    <ligand>
        <name>substrate</name>
    </ligand>
</feature>
<feature type="binding site" evidence="1">
    <location>
        <position position="329"/>
    </location>
    <ligand>
        <name>substrate</name>
    </ligand>
</feature>
<feature type="binding site" evidence="1">
    <location>
        <begin position="349"/>
        <end position="351"/>
    </location>
    <ligand>
        <name>substrate</name>
    </ligand>
</feature>
<feature type="binding site" evidence="1">
    <location>
        <begin position="390"/>
        <end position="393"/>
    </location>
    <ligand>
        <name>substrate</name>
    </ligand>
</feature>
<feature type="binding site" evidence="1">
    <location>
        <position position="429"/>
    </location>
    <ligand>
        <name>substrate</name>
    </ligand>
</feature>
<feature type="binding site" evidence="1">
    <location>
        <position position="433"/>
    </location>
    <ligand>
        <name>Zn(2+)</name>
        <dbReference type="ChEBI" id="CHEBI:29105"/>
    </ligand>
</feature>
<feature type="binding site" evidence="1">
    <location>
        <position position="456"/>
    </location>
    <ligand>
        <name>substrate</name>
    </ligand>
</feature>
<feature type="binding site" evidence="1">
    <location>
        <position position="497"/>
    </location>
    <ligand>
        <name>Zn(2+)</name>
        <dbReference type="ChEBI" id="CHEBI:29105"/>
    </ligand>
</feature>
<feature type="binding site" evidence="1">
    <location>
        <position position="577"/>
    </location>
    <ligand>
        <name>[4Fe-4S] cluster</name>
        <dbReference type="ChEBI" id="CHEBI:49883"/>
        <note>4Fe-4S-S-AdoMet</note>
    </ligand>
</feature>
<feature type="binding site" evidence="1">
    <location>
        <position position="580"/>
    </location>
    <ligand>
        <name>[4Fe-4S] cluster</name>
        <dbReference type="ChEBI" id="CHEBI:49883"/>
        <note>4Fe-4S-S-AdoMet</note>
    </ligand>
</feature>
<feature type="binding site" evidence="1">
    <location>
        <position position="585"/>
    </location>
    <ligand>
        <name>[4Fe-4S] cluster</name>
        <dbReference type="ChEBI" id="CHEBI:49883"/>
        <note>4Fe-4S-S-AdoMet</note>
    </ligand>
</feature>
<organism>
    <name type="scientific">Shewanella amazonensis (strain ATCC BAA-1098 / SB2B)</name>
    <dbReference type="NCBI Taxonomy" id="326297"/>
    <lineage>
        <taxon>Bacteria</taxon>
        <taxon>Pseudomonadati</taxon>
        <taxon>Pseudomonadota</taxon>
        <taxon>Gammaproteobacteria</taxon>
        <taxon>Alteromonadales</taxon>
        <taxon>Shewanellaceae</taxon>
        <taxon>Shewanella</taxon>
    </lineage>
</organism>
<sequence length="664" mass="74154">MSNRRETRKAAQDFIDNLKPLRRPNSEKIFIEGSRPDIQVGMRQIHQTDTRIVNTRGEETFEANPPIKVYDCAGPYSDPNADINVRRGLPKLREGWILARSDTEELNSASSNFTQQRLADDGLDHLRFDVLPKPRRAKAGKRVTQLHYARQGIITPEMEYIAIRENMARDEVTDEQLNRKKPGEAFGALVSKPITPEFVRDEVARGRAIIPANINHPEAEPMIIGRNFLVKVNANIGNSAVTSSIEEEVEKLVWSTRWGADTVMDLSTGRYIHETREWIVRNSPVPIGTVPIYQALEKVNGIAEDLNWEVFRDTLIEQAEQGVDYFTIHAGVLLRYVPMTAKRVTGIVSRGGSIMAKWCLSHHQENFLYTHFRDICELCAAYDVSLSLGDGMRPGSIADANDEAQFAELETLGELVKIAWEYDVQTIIEGPGHIPMQLIKENMDKQLEHCAEAPFYTLGPQTTDIAPGYDHFTSGIGAAMIAWYGCAMLCYVTPKEHLGLPNKEDVKQGLIAYKIAAHAADVAKGHPGAQIRDNALSKARFEFRWEDQYNLGLDPDTARAYHDETLPQESAKVAHFCSMCGPKFCSMKITQDVRDYAASLENAARSEADSVQTLEVGAAESYSKAESYARAGMDKMSATFKQTGSALYSETHVEAALSTEKEPV</sequence>
<reference key="1">
    <citation type="submission" date="2006-12" db="EMBL/GenBank/DDBJ databases">
        <title>Complete sequence of Shewanella amazonensis SB2B.</title>
        <authorList>
            <consortium name="US DOE Joint Genome Institute"/>
            <person name="Copeland A."/>
            <person name="Lucas S."/>
            <person name="Lapidus A."/>
            <person name="Barry K."/>
            <person name="Detter J.C."/>
            <person name="Glavina del Rio T."/>
            <person name="Hammon N."/>
            <person name="Israni S."/>
            <person name="Dalin E."/>
            <person name="Tice H."/>
            <person name="Pitluck S."/>
            <person name="Munk A.C."/>
            <person name="Brettin T."/>
            <person name="Bruce D."/>
            <person name="Han C."/>
            <person name="Tapia R."/>
            <person name="Gilna P."/>
            <person name="Schmutz J."/>
            <person name="Larimer F."/>
            <person name="Land M."/>
            <person name="Hauser L."/>
            <person name="Kyrpides N."/>
            <person name="Mikhailova N."/>
            <person name="Fredrickson J."/>
            <person name="Richardson P."/>
        </authorList>
    </citation>
    <scope>NUCLEOTIDE SEQUENCE [LARGE SCALE GENOMIC DNA]</scope>
    <source>
        <strain>ATCC BAA-1098 / SB2B</strain>
    </source>
</reference>
<name>THIC_SHEAM</name>
<protein>
    <recommendedName>
        <fullName evidence="1">Phosphomethylpyrimidine synthase</fullName>
        <ecNumber evidence="1">4.1.99.17</ecNumber>
    </recommendedName>
    <alternativeName>
        <fullName evidence="1">Hydroxymethylpyrimidine phosphate synthase</fullName>
        <shortName evidence="1">HMP-P synthase</shortName>
        <shortName evidence="1">HMP-phosphate synthase</shortName>
        <shortName evidence="1">HMPP synthase</shortName>
    </alternativeName>
    <alternativeName>
        <fullName evidence="1">Thiamine biosynthesis protein ThiC</fullName>
    </alternativeName>
</protein>
<accession>A1S6Q9</accession>
<evidence type="ECO:0000255" key="1">
    <source>
        <dbReference type="HAMAP-Rule" id="MF_00089"/>
    </source>
</evidence>